<organism>
    <name type="scientific">Streptococcus sanguinis (strain SK36)</name>
    <dbReference type="NCBI Taxonomy" id="388919"/>
    <lineage>
        <taxon>Bacteria</taxon>
        <taxon>Bacillati</taxon>
        <taxon>Bacillota</taxon>
        <taxon>Bacilli</taxon>
        <taxon>Lactobacillales</taxon>
        <taxon>Streptococcaceae</taxon>
        <taxon>Streptococcus</taxon>
    </lineage>
</organism>
<proteinExistence type="inferred from homology"/>
<dbReference type="EC" id="2.7.2.8" evidence="1"/>
<dbReference type="EMBL" id="CP000387">
    <property type="protein sequence ID" value="ABN44191.1"/>
    <property type="molecule type" value="Genomic_DNA"/>
</dbReference>
<dbReference type="RefSeq" id="WP_011836707.1">
    <property type="nucleotide sequence ID" value="NC_009009.1"/>
</dbReference>
<dbReference type="RefSeq" id="YP_001034741.1">
    <property type="nucleotide sequence ID" value="NC_009009.1"/>
</dbReference>
<dbReference type="SMR" id="A3CLY6"/>
<dbReference type="STRING" id="388919.SSA_0759"/>
<dbReference type="KEGG" id="ssa:SSA_0759"/>
<dbReference type="PATRIC" id="fig|388919.9.peg.726"/>
<dbReference type="eggNOG" id="COG0548">
    <property type="taxonomic scope" value="Bacteria"/>
</dbReference>
<dbReference type="HOGENOM" id="CLU_053680_1_0_9"/>
<dbReference type="OrthoDB" id="9803155at2"/>
<dbReference type="UniPathway" id="UPA00068">
    <property type="reaction ID" value="UER00107"/>
</dbReference>
<dbReference type="Proteomes" id="UP000002148">
    <property type="component" value="Chromosome"/>
</dbReference>
<dbReference type="GO" id="GO:0005737">
    <property type="term" value="C:cytoplasm"/>
    <property type="evidence" value="ECO:0007669"/>
    <property type="project" value="UniProtKB-SubCell"/>
</dbReference>
<dbReference type="GO" id="GO:0003991">
    <property type="term" value="F:acetylglutamate kinase activity"/>
    <property type="evidence" value="ECO:0007669"/>
    <property type="project" value="UniProtKB-UniRule"/>
</dbReference>
<dbReference type="GO" id="GO:0005524">
    <property type="term" value="F:ATP binding"/>
    <property type="evidence" value="ECO:0007669"/>
    <property type="project" value="UniProtKB-UniRule"/>
</dbReference>
<dbReference type="GO" id="GO:0042450">
    <property type="term" value="P:arginine biosynthetic process via ornithine"/>
    <property type="evidence" value="ECO:0007669"/>
    <property type="project" value="UniProtKB-UniRule"/>
</dbReference>
<dbReference type="GO" id="GO:0006526">
    <property type="term" value="P:L-arginine biosynthetic process"/>
    <property type="evidence" value="ECO:0007669"/>
    <property type="project" value="UniProtKB-UniPathway"/>
</dbReference>
<dbReference type="CDD" id="cd04238">
    <property type="entry name" value="AAK_NAGK-like"/>
    <property type="match status" value="1"/>
</dbReference>
<dbReference type="Gene3D" id="3.40.1160.10">
    <property type="entry name" value="Acetylglutamate kinase-like"/>
    <property type="match status" value="1"/>
</dbReference>
<dbReference type="HAMAP" id="MF_00082">
    <property type="entry name" value="ArgB"/>
    <property type="match status" value="1"/>
</dbReference>
<dbReference type="InterPro" id="IPR036393">
    <property type="entry name" value="AceGlu_kinase-like_sf"/>
</dbReference>
<dbReference type="InterPro" id="IPR004662">
    <property type="entry name" value="AcgluKinase_fam"/>
</dbReference>
<dbReference type="InterPro" id="IPR037528">
    <property type="entry name" value="ArgB"/>
</dbReference>
<dbReference type="InterPro" id="IPR001048">
    <property type="entry name" value="Asp/Glu/Uridylate_kinase"/>
</dbReference>
<dbReference type="InterPro" id="IPR001057">
    <property type="entry name" value="Glu/AcGlu_kinase"/>
</dbReference>
<dbReference type="NCBIfam" id="TIGR00761">
    <property type="entry name" value="argB"/>
    <property type="match status" value="1"/>
</dbReference>
<dbReference type="PANTHER" id="PTHR23342">
    <property type="entry name" value="N-ACETYLGLUTAMATE SYNTHASE"/>
    <property type="match status" value="1"/>
</dbReference>
<dbReference type="PANTHER" id="PTHR23342:SF0">
    <property type="entry name" value="N-ACETYLGLUTAMATE SYNTHASE, MITOCHONDRIAL"/>
    <property type="match status" value="1"/>
</dbReference>
<dbReference type="Pfam" id="PF00696">
    <property type="entry name" value="AA_kinase"/>
    <property type="match status" value="1"/>
</dbReference>
<dbReference type="PIRSF" id="PIRSF000728">
    <property type="entry name" value="NAGK"/>
    <property type="match status" value="1"/>
</dbReference>
<dbReference type="PRINTS" id="PR00474">
    <property type="entry name" value="GLU5KINASE"/>
</dbReference>
<dbReference type="SUPFAM" id="SSF53633">
    <property type="entry name" value="Carbamate kinase-like"/>
    <property type="match status" value="1"/>
</dbReference>
<name>ARGB_STRSV</name>
<comment type="function">
    <text evidence="1">Catalyzes the ATP-dependent phosphorylation of N-acetyl-L-glutamate.</text>
</comment>
<comment type="catalytic activity">
    <reaction evidence="1">
        <text>N-acetyl-L-glutamate + ATP = N-acetyl-L-glutamyl 5-phosphate + ADP</text>
        <dbReference type="Rhea" id="RHEA:14629"/>
        <dbReference type="ChEBI" id="CHEBI:30616"/>
        <dbReference type="ChEBI" id="CHEBI:44337"/>
        <dbReference type="ChEBI" id="CHEBI:57936"/>
        <dbReference type="ChEBI" id="CHEBI:456216"/>
        <dbReference type="EC" id="2.7.2.8"/>
    </reaction>
</comment>
<comment type="pathway">
    <text evidence="1">Amino-acid biosynthesis; L-arginine biosynthesis; N(2)-acetyl-L-ornithine from L-glutamate: step 2/4.</text>
</comment>
<comment type="subcellular location">
    <subcellularLocation>
        <location evidence="1">Cytoplasm</location>
    </subcellularLocation>
</comment>
<comment type="similarity">
    <text evidence="1">Belongs to the acetylglutamate kinase family. ArgB subfamily.</text>
</comment>
<protein>
    <recommendedName>
        <fullName evidence="1">Acetylglutamate kinase</fullName>
        <ecNumber evidence="1">2.7.2.8</ecNumber>
    </recommendedName>
    <alternativeName>
        <fullName evidence="1">N-acetyl-L-glutamate 5-phosphotransferase</fullName>
    </alternativeName>
    <alternativeName>
        <fullName evidence="1">NAG kinase</fullName>
        <shortName evidence="1">NAGK</shortName>
    </alternativeName>
</protein>
<gene>
    <name evidence="1" type="primary">argB</name>
    <name type="ordered locus">SSA_0759</name>
</gene>
<sequence length="245" mass="26161">MKDVIVIKIGGVAAQKLSDKFIKQMQEWIAAGKKIVVVHGGGLVINQLMKERQLPTRKVKGLRVTAKSDLPIIEQALLGQVGRTLTQELNDSDIESLQLVSHLGKTVLADFIDKDLYGYVGQVTAIQTAYLEQLLDADMVPVLASLGENAAGELLNINADYLAAAVASSLQAEKLILMTDIEGVLEDKKVLPQLLTSQISKKIQTGVIKGGMIPKIESAVQTVLSGVGQVLIGDNLLTGTLIAEG</sequence>
<feature type="chain" id="PRO_1000010548" description="Acetylglutamate kinase">
    <location>
        <begin position="1"/>
        <end position="245"/>
    </location>
</feature>
<feature type="binding site" evidence="1">
    <location>
        <begin position="41"/>
        <end position="42"/>
    </location>
    <ligand>
        <name>substrate</name>
    </ligand>
</feature>
<feature type="binding site" evidence="1">
    <location>
        <position position="63"/>
    </location>
    <ligand>
        <name>substrate</name>
    </ligand>
</feature>
<feature type="binding site" evidence="1">
    <location>
        <position position="156"/>
    </location>
    <ligand>
        <name>substrate</name>
    </ligand>
</feature>
<feature type="site" description="Transition state stabilizer" evidence="1">
    <location>
        <position position="8"/>
    </location>
</feature>
<feature type="site" description="Transition state stabilizer" evidence="1">
    <location>
        <position position="215"/>
    </location>
</feature>
<evidence type="ECO:0000255" key="1">
    <source>
        <dbReference type="HAMAP-Rule" id="MF_00082"/>
    </source>
</evidence>
<accession>A3CLY6</accession>
<keyword id="KW-0028">Amino-acid biosynthesis</keyword>
<keyword id="KW-0055">Arginine biosynthesis</keyword>
<keyword id="KW-0067">ATP-binding</keyword>
<keyword id="KW-0963">Cytoplasm</keyword>
<keyword id="KW-0418">Kinase</keyword>
<keyword id="KW-0547">Nucleotide-binding</keyword>
<keyword id="KW-1185">Reference proteome</keyword>
<keyword id="KW-0808">Transferase</keyword>
<reference key="1">
    <citation type="journal article" date="2007" name="J. Bacteriol.">
        <title>Genome of the opportunistic pathogen Streptococcus sanguinis.</title>
        <authorList>
            <person name="Xu P."/>
            <person name="Alves J.M."/>
            <person name="Kitten T."/>
            <person name="Brown A."/>
            <person name="Chen Z."/>
            <person name="Ozaki L.S."/>
            <person name="Manque P."/>
            <person name="Ge X."/>
            <person name="Serrano M.G."/>
            <person name="Puiu D."/>
            <person name="Hendricks S."/>
            <person name="Wang Y."/>
            <person name="Chaplin M.D."/>
            <person name="Akan D."/>
            <person name="Paik S."/>
            <person name="Peterson D.L."/>
            <person name="Macrina F.L."/>
            <person name="Buck G.A."/>
        </authorList>
    </citation>
    <scope>NUCLEOTIDE SEQUENCE [LARGE SCALE GENOMIC DNA]</scope>
    <source>
        <strain>SK36</strain>
    </source>
</reference>